<evidence type="ECO:0000255" key="1">
    <source>
        <dbReference type="HAMAP-Rule" id="MF_00036"/>
    </source>
</evidence>
<accession>A7H4N3</accession>
<name>SYA_CAMJD</name>
<organism>
    <name type="scientific">Campylobacter jejuni subsp. doylei (strain ATCC BAA-1458 / RM4099 / 269.97)</name>
    <dbReference type="NCBI Taxonomy" id="360109"/>
    <lineage>
        <taxon>Bacteria</taxon>
        <taxon>Pseudomonadati</taxon>
        <taxon>Campylobacterota</taxon>
        <taxon>Epsilonproteobacteria</taxon>
        <taxon>Campylobacterales</taxon>
        <taxon>Campylobacteraceae</taxon>
        <taxon>Campylobacter</taxon>
    </lineage>
</organism>
<feature type="chain" id="PRO_0000347542" description="Alanine--tRNA ligase">
    <location>
        <begin position="1"/>
        <end position="842"/>
    </location>
</feature>
<feature type="binding site" evidence="1">
    <location>
        <position position="549"/>
    </location>
    <ligand>
        <name>Zn(2+)</name>
        <dbReference type="ChEBI" id="CHEBI:29105"/>
    </ligand>
</feature>
<feature type="binding site" evidence="1">
    <location>
        <position position="553"/>
    </location>
    <ligand>
        <name>Zn(2+)</name>
        <dbReference type="ChEBI" id="CHEBI:29105"/>
    </ligand>
</feature>
<feature type="binding site" evidence="1">
    <location>
        <position position="650"/>
    </location>
    <ligand>
        <name>Zn(2+)</name>
        <dbReference type="ChEBI" id="CHEBI:29105"/>
    </ligand>
</feature>
<feature type="binding site" evidence="1">
    <location>
        <position position="654"/>
    </location>
    <ligand>
        <name>Zn(2+)</name>
        <dbReference type="ChEBI" id="CHEBI:29105"/>
    </ligand>
</feature>
<comment type="function">
    <text evidence="1">Catalyzes the attachment of alanine to tRNA(Ala) in a two-step reaction: alanine is first activated by ATP to form Ala-AMP and then transferred to the acceptor end of tRNA(Ala). Also edits incorrectly charged Ser-tRNA(Ala) and Gly-tRNA(Ala) via its editing domain.</text>
</comment>
<comment type="catalytic activity">
    <reaction evidence="1">
        <text>tRNA(Ala) + L-alanine + ATP = L-alanyl-tRNA(Ala) + AMP + diphosphate</text>
        <dbReference type="Rhea" id="RHEA:12540"/>
        <dbReference type="Rhea" id="RHEA-COMP:9657"/>
        <dbReference type="Rhea" id="RHEA-COMP:9923"/>
        <dbReference type="ChEBI" id="CHEBI:30616"/>
        <dbReference type="ChEBI" id="CHEBI:33019"/>
        <dbReference type="ChEBI" id="CHEBI:57972"/>
        <dbReference type="ChEBI" id="CHEBI:78442"/>
        <dbReference type="ChEBI" id="CHEBI:78497"/>
        <dbReference type="ChEBI" id="CHEBI:456215"/>
        <dbReference type="EC" id="6.1.1.7"/>
    </reaction>
</comment>
<comment type="cofactor">
    <cofactor evidence="1">
        <name>Zn(2+)</name>
        <dbReference type="ChEBI" id="CHEBI:29105"/>
    </cofactor>
    <text evidence="1">Binds 1 zinc ion per subunit.</text>
</comment>
<comment type="subcellular location">
    <subcellularLocation>
        <location evidence="1">Cytoplasm</location>
    </subcellularLocation>
</comment>
<comment type="domain">
    <text evidence="1">Consists of three domains; the N-terminal catalytic domain, the editing domain and the C-terminal C-Ala domain. The editing domain removes incorrectly charged amino acids, while the C-Ala domain, along with tRNA(Ala), serves as a bridge to cooperatively bring together the editing and aminoacylation centers thus stimulating deacylation of misacylated tRNAs.</text>
</comment>
<comment type="similarity">
    <text evidence="1">Belongs to the class-II aminoacyl-tRNA synthetase family.</text>
</comment>
<proteinExistence type="inferred from homology"/>
<sequence length="842" mass="94690">MDIRKAYLDFFASKRHEITPSSPLVPDDATLLFTNAGMVPFKSIFTGEIPRPNPPRKTSCQTCIRAGGKHNDLDNVGYTARHHTFFEMLGNFSFGDYFKEQAIAYAWEFVTEVLKLPKDRLYITVHENDDEAFNLWQKHIQKERIYKFGDKDNFWQMGDTGPCGPCSEIFYDQGQEHFNSSEDYMGGDGDRFLEIWNLVFMQYERSANGVLSPLPKPSIDTGMGLERVTAIKEGKFSNFDSSLFMPIINEISKLCNKTYVYESGASFRVIADHIRSSVFLLAQGVSFDKEGRGYVLRRILRRALRHGYLLGFKQAFMYKLVDIVCDLMGGHYTYLNEKKDSIKEQIRFEEERFLSTIENGIEIFNEELKNTKEIFSGEVAFKLYDTYGFPLDLTADMLREKNLKVDEEKFELLMNEQKARAKASWKGSGDKTVSGDFKNLLEKFGENHFVGYEKAECESKILALLDEDFKEVSTLKDAGWVMLENTPFYATSGGQSADSGFIAKREVLDTQKFFNLNLSFIKAGEELKVGTIAHARIDAEKREQIARHHSATHLLHHALREILGSHVSQAGSLVESNKLRFDFTHHKALSKEELESIEKRVNEMIINSSEAILENMPLEEAKKSGAIALFNEKYQGNVRVLTLGESKELCGGTHVKNTAQIGSFYIVKESGVSAGVRRIEAVVSKAALEFVKNQLEGLSKAKDELKNNDILSGVKKLKNEILSLKNELKNSSKTELDSKNIQGVEICVKRVDNGDIKAMIDDFKNKFAKAVILLIQVKDEKITLAAGVKDAPLKAGALVKEAAQILGGNGGGRDDFATAGGKDLSKIDEALKQSLETIEKAL</sequence>
<protein>
    <recommendedName>
        <fullName evidence="1">Alanine--tRNA ligase</fullName>
        <ecNumber evidence="1">6.1.1.7</ecNumber>
    </recommendedName>
    <alternativeName>
        <fullName evidence="1">Alanyl-tRNA synthetase</fullName>
        <shortName evidence="1">AlaRS</shortName>
    </alternativeName>
</protein>
<gene>
    <name evidence="1" type="primary">alaS</name>
    <name type="ordered locus">JJD26997_1429</name>
</gene>
<keyword id="KW-0030">Aminoacyl-tRNA synthetase</keyword>
<keyword id="KW-0067">ATP-binding</keyword>
<keyword id="KW-0963">Cytoplasm</keyword>
<keyword id="KW-0436">Ligase</keyword>
<keyword id="KW-0479">Metal-binding</keyword>
<keyword id="KW-0547">Nucleotide-binding</keyword>
<keyword id="KW-0648">Protein biosynthesis</keyword>
<keyword id="KW-0694">RNA-binding</keyword>
<keyword id="KW-0820">tRNA-binding</keyword>
<keyword id="KW-0862">Zinc</keyword>
<reference key="1">
    <citation type="submission" date="2007-07" db="EMBL/GenBank/DDBJ databases">
        <title>Complete genome sequence of Campylobacter jejuni subsp doylei 269.97 isolated from human blood.</title>
        <authorList>
            <person name="Fouts D.E."/>
            <person name="Mongodin E.F."/>
            <person name="Puiu D."/>
            <person name="Sebastian Y."/>
            <person name="Miller W.G."/>
            <person name="Mandrell R.E."/>
            <person name="Lastovica A.J."/>
            <person name="Nelson K.E."/>
        </authorList>
    </citation>
    <scope>NUCLEOTIDE SEQUENCE [LARGE SCALE GENOMIC DNA]</scope>
    <source>
        <strain>ATCC BAA-1458 / RM4099 / 269.97</strain>
    </source>
</reference>
<dbReference type="EC" id="6.1.1.7" evidence="1"/>
<dbReference type="EMBL" id="CP000768">
    <property type="protein sequence ID" value="ABS43694.1"/>
    <property type="molecule type" value="Genomic_DNA"/>
</dbReference>
<dbReference type="SMR" id="A7H4N3"/>
<dbReference type="KEGG" id="cjd:JJD26997_1429"/>
<dbReference type="HOGENOM" id="CLU_004485_1_1_7"/>
<dbReference type="Proteomes" id="UP000002302">
    <property type="component" value="Chromosome"/>
</dbReference>
<dbReference type="GO" id="GO:0005829">
    <property type="term" value="C:cytosol"/>
    <property type="evidence" value="ECO:0007669"/>
    <property type="project" value="TreeGrafter"/>
</dbReference>
<dbReference type="GO" id="GO:0004813">
    <property type="term" value="F:alanine-tRNA ligase activity"/>
    <property type="evidence" value="ECO:0007669"/>
    <property type="project" value="UniProtKB-UniRule"/>
</dbReference>
<dbReference type="GO" id="GO:0002161">
    <property type="term" value="F:aminoacyl-tRNA deacylase activity"/>
    <property type="evidence" value="ECO:0007669"/>
    <property type="project" value="TreeGrafter"/>
</dbReference>
<dbReference type="GO" id="GO:0005524">
    <property type="term" value="F:ATP binding"/>
    <property type="evidence" value="ECO:0007669"/>
    <property type="project" value="UniProtKB-UniRule"/>
</dbReference>
<dbReference type="GO" id="GO:0000049">
    <property type="term" value="F:tRNA binding"/>
    <property type="evidence" value="ECO:0007669"/>
    <property type="project" value="UniProtKB-KW"/>
</dbReference>
<dbReference type="GO" id="GO:0008270">
    <property type="term" value="F:zinc ion binding"/>
    <property type="evidence" value="ECO:0007669"/>
    <property type="project" value="UniProtKB-UniRule"/>
</dbReference>
<dbReference type="GO" id="GO:0006419">
    <property type="term" value="P:alanyl-tRNA aminoacylation"/>
    <property type="evidence" value="ECO:0007669"/>
    <property type="project" value="UniProtKB-UniRule"/>
</dbReference>
<dbReference type="GO" id="GO:0045892">
    <property type="term" value="P:negative regulation of DNA-templated transcription"/>
    <property type="evidence" value="ECO:0007669"/>
    <property type="project" value="TreeGrafter"/>
</dbReference>
<dbReference type="CDD" id="cd00673">
    <property type="entry name" value="AlaRS_core"/>
    <property type="match status" value="1"/>
</dbReference>
<dbReference type="FunFam" id="3.10.310.40:FF:000001">
    <property type="entry name" value="Alanine--tRNA ligase"/>
    <property type="match status" value="1"/>
</dbReference>
<dbReference type="FunFam" id="3.30.54.20:FF:000001">
    <property type="entry name" value="Alanine--tRNA ligase"/>
    <property type="match status" value="1"/>
</dbReference>
<dbReference type="FunFam" id="3.30.930.10:FF:000004">
    <property type="entry name" value="Alanine--tRNA ligase"/>
    <property type="match status" value="1"/>
</dbReference>
<dbReference type="FunFam" id="3.30.980.10:FF:000004">
    <property type="entry name" value="Alanine--tRNA ligase, cytoplasmic"/>
    <property type="match status" value="1"/>
</dbReference>
<dbReference type="Gene3D" id="2.40.30.130">
    <property type="match status" value="1"/>
</dbReference>
<dbReference type="Gene3D" id="3.10.310.40">
    <property type="match status" value="1"/>
</dbReference>
<dbReference type="Gene3D" id="3.30.54.20">
    <property type="match status" value="1"/>
</dbReference>
<dbReference type="Gene3D" id="3.30.930.10">
    <property type="entry name" value="Bira Bifunctional Protein, Domain 2"/>
    <property type="match status" value="1"/>
</dbReference>
<dbReference type="Gene3D" id="3.30.980.10">
    <property type="entry name" value="Threonyl-trna Synthetase, Chain A, domain 2"/>
    <property type="match status" value="1"/>
</dbReference>
<dbReference type="HAMAP" id="MF_00036_B">
    <property type="entry name" value="Ala_tRNA_synth_B"/>
    <property type="match status" value="1"/>
</dbReference>
<dbReference type="InterPro" id="IPR045864">
    <property type="entry name" value="aa-tRNA-synth_II/BPL/LPL"/>
</dbReference>
<dbReference type="InterPro" id="IPR002318">
    <property type="entry name" value="Ala-tRNA-lgiase_IIc"/>
</dbReference>
<dbReference type="InterPro" id="IPR018162">
    <property type="entry name" value="Ala-tRNA-ligase_IIc_anticod-bd"/>
</dbReference>
<dbReference type="InterPro" id="IPR018165">
    <property type="entry name" value="Ala-tRNA-synth_IIc_core"/>
</dbReference>
<dbReference type="InterPro" id="IPR018164">
    <property type="entry name" value="Ala-tRNA-synth_IIc_N"/>
</dbReference>
<dbReference type="InterPro" id="IPR050058">
    <property type="entry name" value="Ala-tRNA_ligase"/>
</dbReference>
<dbReference type="InterPro" id="IPR023033">
    <property type="entry name" value="Ala_tRNA_ligase_euk/bac"/>
</dbReference>
<dbReference type="InterPro" id="IPR003156">
    <property type="entry name" value="DHHA1_dom"/>
</dbReference>
<dbReference type="InterPro" id="IPR018163">
    <property type="entry name" value="Thr/Ala-tRNA-synth_IIc_edit"/>
</dbReference>
<dbReference type="InterPro" id="IPR009000">
    <property type="entry name" value="Transl_B-barrel_sf"/>
</dbReference>
<dbReference type="InterPro" id="IPR012947">
    <property type="entry name" value="tRNA_SAD"/>
</dbReference>
<dbReference type="NCBIfam" id="TIGR00344">
    <property type="entry name" value="alaS"/>
    <property type="match status" value="1"/>
</dbReference>
<dbReference type="PANTHER" id="PTHR11777:SF9">
    <property type="entry name" value="ALANINE--TRNA LIGASE, CYTOPLASMIC"/>
    <property type="match status" value="1"/>
</dbReference>
<dbReference type="PANTHER" id="PTHR11777">
    <property type="entry name" value="ALANYL-TRNA SYNTHETASE"/>
    <property type="match status" value="1"/>
</dbReference>
<dbReference type="Pfam" id="PF02272">
    <property type="entry name" value="DHHA1"/>
    <property type="match status" value="1"/>
</dbReference>
<dbReference type="Pfam" id="PF01411">
    <property type="entry name" value="tRNA-synt_2c"/>
    <property type="match status" value="1"/>
</dbReference>
<dbReference type="Pfam" id="PF07973">
    <property type="entry name" value="tRNA_SAD"/>
    <property type="match status" value="1"/>
</dbReference>
<dbReference type="PRINTS" id="PR00980">
    <property type="entry name" value="TRNASYNTHALA"/>
</dbReference>
<dbReference type="SMART" id="SM00863">
    <property type="entry name" value="tRNA_SAD"/>
    <property type="match status" value="1"/>
</dbReference>
<dbReference type="SUPFAM" id="SSF55681">
    <property type="entry name" value="Class II aaRS and biotin synthetases"/>
    <property type="match status" value="1"/>
</dbReference>
<dbReference type="SUPFAM" id="SSF101353">
    <property type="entry name" value="Putative anticodon-binding domain of alanyl-tRNA synthetase (AlaRS)"/>
    <property type="match status" value="1"/>
</dbReference>
<dbReference type="SUPFAM" id="SSF55186">
    <property type="entry name" value="ThrRS/AlaRS common domain"/>
    <property type="match status" value="1"/>
</dbReference>
<dbReference type="SUPFAM" id="SSF50447">
    <property type="entry name" value="Translation proteins"/>
    <property type="match status" value="1"/>
</dbReference>
<dbReference type="PROSITE" id="PS50860">
    <property type="entry name" value="AA_TRNA_LIGASE_II_ALA"/>
    <property type="match status" value="1"/>
</dbReference>